<proteinExistence type="inferred from homology"/>
<feature type="chain" id="PRO_0000365199" description="Eukaryotic translation initiation factor 3 subunit H">
    <location>
        <begin position="1"/>
        <end position="365"/>
    </location>
</feature>
<feature type="domain" description="MPN" evidence="2">
    <location>
        <begin position="11"/>
        <end position="160"/>
    </location>
</feature>
<accession>A1CQB4</accession>
<dbReference type="EMBL" id="DS027059">
    <property type="protein sequence ID" value="EAW07835.1"/>
    <property type="molecule type" value="Genomic_DNA"/>
</dbReference>
<dbReference type="RefSeq" id="XP_001269261.1">
    <property type="nucleotide sequence ID" value="XM_001269260.1"/>
</dbReference>
<dbReference type="SMR" id="A1CQB4"/>
<dbReference type="STRING" id="344612.A1CQB4"/>
<dbReference type="EnsemblFungi" id="EAW07835">
    <property type="protein sequence ID" value="EAW07835"/>
    <property type="gene ID" value="ACLA_025520"/>
</dbReference>
<dbReference type="GeneID" id="4701965"/>
<dbReference type="KEGG" id="act:ACLA_025520"/>
<dbReference type="VEuPathDB" id="FungiDB:ACLA_025520"/>
<dbReference type="eggNOG" id="KOG1560">
    <property type="taxonomic scope" value="Eukaryota"/>
</dbReference>
<dbReference type="HOGENOM" id="CLU_044094_1_0_1"/>
<dbReference type="OMA" id="WYQSTYF"/>
<dbReference type="OrthoDB" id="10265695at2759"/>
<dbReference type="Proteomes" id="UP000006701">
    <property type="component" value="Unassembled WGS sequence"/>
</dbReference>
<dbReference type="GO" id="GO:0016282">
    <property type="term" value="C:eukaryotic 43S preinitiation complex"/>
    <property type="evidence" value="ECO:0007669"/>
    <property type="project" value="UniProtKB-UniRule"/>
</dbReference>
<dbReference type="GO" id="GO:0033290">
    <property type="term" value="C:eukaryotic 48S preinitiation complex"/>
    <property type="evidence" value="ECO:0007669"/>
    <property type="project" value="UniProtKB-UniRule"/>
</dbReference>
<dbReference type="GO" id="GO:0005852">
    <property type="term" value="C:eukaryotic translation initiation factor 3 complex"/>
    <property type="evidence" value="ECO:0007669"/>
    <property type="project" value="UniProtKB-UniRule"/>
</dbReference>
<dbReference type="GO" id="GO:0008237">
    <property type="term" value="F:metallopeptidase activity"/>
    <property type="evidence" value="ECO:0007669"/>
    <property type="project" value="InterPro"/>
</dbReference>
<dbReference type="GO" id="GO:0003743">
    <property type="term" value="F:translation initiation factor activity"/>
    <property type="evidence" value="ECO:0007669"/>
    <property type="project" value="UniProtKB-UniRule"/>
</dbReference>
<dbReference type="GO" id="GO:0001732">
    <property type="term" value="P:formation of cytoplasmic translation initiation complex"/>
    <property type="evidence" value="ECO:0007669"/>
    <property type="project" value="UniProtKB-UniRule"/>
</dbReference>
<dbReference type="CDD" id="cd08065">
    <property type="entry name" value="MPN_eIF3h"/>
    <property type="match status" value="1"/>
</dbReference>
<dbReference type="FunFam" id="3.40.140.10:FF:000052">
    <property type="entry name" value="Eukaryotic translation initiation factor 3 subunit H"/>
    <property type="match status" value="1"/>
</dbReference>
<dbReference type="Gene3D" id="3.40.140.10">
    <property type="entry name" value="Cytidine Deaminase, domain 2"/>
    <property type="match status" value="1"/>
</dbReference>
<dbReference type="HAMAP" id="MF_03007">
    <property type="entry name" value="eIF3h"/>
    <property type="match status" value="1"/>
</dbReference>
<dbReference type="InterPro" id="IPR027524">
    <property type="entry name" value="eIF3h"/>
</dbReference>
<dbReference type="InterPro" id="IPR045810">
    <property type="entry name" value="eIF3h_C"/>
</dbReference>
<dbReference type="InterPro" id="IPR000555">
    <property type="entry name" value="JAMM/MPN+_dom"/>
</dbReference>
<dbReference type="InterPro" id="IPR050242">
    <property type="entry name" value="JAMM_MPN+_peptidase_M67A"/>
</dbReference>
<dbReference type="InterPro" id="IPR037518">
    <property type="entry name" value="MPN"/>
</dbReference>
<dbReference type="PANTHER" id="PTHR10410">
    <property type="entry name" value="EUKARYOTIC TRANSLATION INITIATION FACTOR 3 -RELATED"/>
    <property type="match status" value="1"/>
</dbReference>
<dbReference type="Pfam" id="PF19445">
    <property type="entry name" value="eIF3h_C"/>
    <property type="match status" value="2"/>
</dbReference>
<dbReference type="Pfam" id="PF01398">
    <property type="entry name" value="JAB"/>
    <property type="match status" value="1"/>
</dbReference>
<dbReference type="SMART" id="SM00232">
    <property type="entry name" value="JAB_MPN"/>
    <property type="match status" value="1"/>
</dbReference>
<dbReference type="PROSITE" id="PS50249">
    <property type="entry name" value="MPN"/>
    <property type="match status" value="1"/>
</dbReference>
<organism>
    <name type="scientific">Aspergillus clavatus (strain ATCC 1007 / CBS 513.65 / DSM 816 / NCTC 3887 / NRRL 1 / QM 1276 / 107)</name>
    <dbReference type="NCBI Taxonomy" id="344612"/>
    <lineage>
        <taxon>Eukaryota</taxon>
        <taxon>Fungi</taxon>
        <taxon>Dikarya</taxon>
        <taxon>Ascomycota</taxon>
        <taxon>Pezizomycotina</taxon>
        <taxon>Eurotiomycetes</taxon>
        <taxon>Eurotiomycetidae</taxon>
        <taxon>Eurotiales</taxon>
        <taxon>Aspergillaceae</taxon>
        <taxon>Aspergillus</taxon>
        <taxon>Aspergillus subgen. Fumigati</taxon>
    </lineage>
</organism>
<reference key="1">
    <citation type="journal article" date="2008" name="PLoS Genet.">
        <title>Genomic islands in the pathogenic filamentous fungus Aspergillus fumigatus.</title>
        <authorList>
            <person name="Fedorova N.D."/>
            <person name="Khaldi N."/>
            <person name="Joardar V.S."/>
            <person name="Maiti R."/>
            <person name="Amedeo P."/>
            <person name="Anderson M.J."/>
            <person name="Crabtree J."/>
            <person name="Silva J.C."/>
            <person name="Badger J.H."/>
            <person name="Albarraq A."/>
            <person name="Angiuoli S."/>
            <person name="Bussey H."/>
            <person name="Bowyer P."/>
            <person name="Cotty P.J."/>
            <person name="Dyer P.S."/>
            <person name="Egan A."/>
            <person name="Galens K."/>
            <person name="Fraser-Liggett C.M."/>
            <person name="Haas B.J."/>
            <person name="Inman J.M."/>
            <person name="Kent R."/>
            <person name="Lemieux S."/>
            <person name="Malavazi I."/>
            <person name="Orvis J."/>
            <person name="Roemer T."/>
            <person name="Ronning C.M."/>
            <person name="Sundaram J.P."/>
            <person name="Sutton G."/>
            <person name="Turner G."/>
            <person name="Venter J.C."/>
            <person name="White O.R."/>
            <person name="Whitty B.R."/>
            <person name="Youngman P."/>
            <person name="Wolfe K.H."/>
            <person name="Goldman G.H."/>
            <person name="Wortman J.R."/>
            <person name="Jiang B."/>
            <person name="Denning D.W."/>
            <person name="Nierman W.C."/>
        </authorList>
    </citation>
    <scope>NUCLEOTIDE SEQUENCE [LARGE SCALE GENOMIC DNA]</scope>
    <source>
        <strain>ATCC 1007 / CBS 513.65 / DSM 816 / NCTC 3887 / NRRL 1 / QM 1276 / 107</strain>
    </source>
</reference>
<keyword id="KW-0963">Cytoplasm</keyword>
<keyword id="KW-0396">Initiation factor</keyword>
<keyword id="KW-0648">Protein biosynthesis</keyword>
<keyword id="KW-1185">Reference proteome</keyword>
<comment type="function">
    <text evidence="1">Component of the eukaryotic translation initiation factor 3 (eIF-3) complex, which is involved in protein synthesis of a specialized repertoire of mRNAs and, together with other initiation factors, stimulates binding of mRNA and methionyl-tRNAi to the 40S ribosome. The eIF-3 complex specifically targets and initiates translation of a subset of mRNAs involved in cell proliferation.</text>
</comment>
<comment type="subunit">
    <text evidence="1">Component of the eukaryotic translation initiation factor 3 (eIF-3) complex.</text>
</comment>
<comment type="subcellular location">
    <subcellularLocation>
        <location evidence="1">Cytoplasm</location>
    </subcellularLocation>
</comment>
<comment type="similarity">
    <text evidence="1">Belongs to the eIF-3 subunit H family.</text>
</comment>
<evidence type="ECO:0000255" key="1">
    <source>
        <dbReference type="HAMAP-Rule" id="MF_03007"/>
    </source>
</evidence>
<evidence type="ECO:0000255" key="2">
    <source>
        <dbReference type="PROSITE-ProRule" id="PRU01182"/>
    </source>
</evidence>
<sequence>MAEKETPLTAVKVEALVVMKIIKHCSQTFPTTATGSIVGMDVGGTLEITNSFPFPVLEVPSESHFENAPTNPAAAAPRAKGNAAYQAEMIRMLREVNVDANNVGWYTSANMGNFVNMNVVENQFFYQKEMNERTVALVHDVSRSSQGSLSLRAFRLSPKFMTAFKENKFTSEELQKSNLRYQDIFVELPVEIHNSHLITSFIHQLQTPNIPTPTELPPSLAALESGPFVNSTILAPNYDNLTLSIDPFLEKNCDLLLDSMETHHTETNNFQYYQRSLAREQQRISAWQQKRKQENATRATLKQPLLPEDEWQRLFKLPQEPSRLDSMLNSRQVDQYARQVDSFVSATTGKMFAVKGNLLPGETTK</sequence>
<gene>
    <name type="ORF">ACLA_025520</name>
</gene>
<protein>
    <recommendedName>
        <fullName evidence="1">Eukaryotic translation initiation factor 3 subunit H</fullName>
        <shortName evidence="1">eIF3h</shortName>
    </recommendedName>
</protein>
<name>EIF3H_ASPCL</name>